<name>RL2_METM5</name>
<comment type="function">
    <text evidence="1">One of the primary rRNA binding proteins. Required for association of the 30S and 50S subunits to form the 70S ribosome, for tRNA binding and peptide bond formation. It has been suggested to have peptidyltransferase activity; this is somewhat controversial. Makes several contacts with the 16S rRNA in the 70S ribosome.</text>
</comment>
<comment type="subunit">
    <text evidence="1">Part of the 50S ribosomal subunit. Forms a bridge to the 30S subunit in the 70S ribosome.</text>
</comment>
<comment type="similarity">
    <text evidence="1">Belongs to the universal ribosomal protein uL2 family.</text>
</comment>
<evidence type="ECO:0000255" key="1">
    <source>
        <dbReference type="HAMAP-Rule" id="MF_01320"/>
    </source>
</evidence>
<evidence type="ECO:0000256" key="2">
    <source>
        <dbReference type="SAM" id="MobiDB-lite"/>
    </source>
</evidence>
<evidence type="ECO:0000305" key="3"/>
<organism>
    <name type="scientific">Methanococcus maripaludis (strain C5 / ATCC BAA-1333)</name>
    <dbReference type="NCBI Taxonomy" id="402880"/>
    <lineage>
        <taxon>Archaea</taxon>
        <taxon>Methanobacteriati</taxon>
        <taxon>Methanobacteriota</taxon>
        <taxon>Methanomada group</taxon>
        <taxon>Methanococci</taxon>
        <taxon>Methanococcales</taxon>
        <taxon>Methanococcaceae</taxon>
        <taxon>Methanococcus</taxon>
    </lineage>
</organism>
<gene>
    <name evidence="1" type="primary">rpl2</name>
    <name type="ordered locus">MmarC5_0030</name>
</gene>
<accession>A4FVX9</accession>
<proteinExistence type="inferred from homology"/>
<reference key="1">
    <citation type="submission" date="2007-03" db="EMBL/GenBank/DDBJ databases">
        <title>Complete sequence of chromosome of Methanococcus maripaludis C5.</title>
        <authorList>
            <consortium name="US DOE Joint Genome Institute"/>
            <person name="Copeland A."/>
            <person name="Lucas S."/>
            <person name="Lapidus A."/>
            <person name="Barry K."/>
            <person name="Glavina del Rio T."/>
            <person name="Dalin E."/>
            <person name="Tice H."/>
            <person name="Pitluck S."/>
            <person name="Chertkov O."/>
            <person name="Brettin T."/>
            <person name="Bruce D."/>
            <person name="Han C."/>
            <person name="Detter J.C."/>
            <person name="Schmutz J."/>
            <person name="Larimer F."/>
            <person name="Land M."/>
            <person name="Hauser L."/>
            <person name="Kyrpides N."/>
            <person name="Mikhailova N."/>
            <person name="Sieprawska-Lupa M."/>
            <person name="Whitman W.B."/>
            <person name="Richardson P."/>
        </authorList>
    </citation>
    <scope>NUCLEOTIDE SEQUENCE [LARGE SCALE GENOMIC DNA]</scope>
    <source>
        <strain>C5 / ATCC BAA-1333</strain>
    </source>
</reference>
<feature type="chain" id="PRO_0000310049" description="Large ribosomal subunit protein uL2">
    <location>
        <begin position="1"/>
        <end position="240"/>
    </location>
</feature>
<feature type="region of interest" description="Disordered" evidence="2">
    <location>
        <begin position="1"/>
        <end position="28"/>
    </location>
</feature>
<feature type="region of interest" description="Disordered" evidence="2">
    <location>
        <begin position="206"/>
        <end position="240"/>
    </location>
</feature>
<feature type="compositionally biased region" description="Polar residues" evidence="2">
    <location>
        <begin position="1"/>
        <end position="11"/>
    </location>
</feature>
<feature type="compositionally biased region" description="Basic residues" evidence="2">
    <location>
        <begin position="13"/>
        <end position="28"/>
    </location>
</feature>
<feature type="compositionally biased region" description="Basic residues" evidence="2">
    <location>
        <begin position="224"/>
        <end position="240"/>
    </location>
</feature>
<keyword id="KW-0687">Ribonucleoprotein</keyword>
<keyword id="KW-0689">Ribosomal protein</keyword>
<keyword id="KW-0694">RNA-binding</keyword>
<keyword id="KW-0699">rRNA-binding</keyword>
<dbReference type="EMBL" id="CP000609">
    <property type="protein sequence ID" value="ABO34347.1"/>
    <property type="molecule type" value="Genomic_DNA"/>
</dbReference>
<dbReference type="RefSeq" id="WP_011867809.1">
    <property type="nucleotide sequence ID" value="NC_009135.1"/>
</dbReference>
<dbReference type="SMR" id="A4FVX9"/>
<dbReference type="STRING" id="402880.MmarC5_0030"/>
<dbReference type="GeneID" id="4928123"/>
<dbReference type="KEGG" id="mmq:MmarC5_0030"/>
<dbReference type="eggNOG" id="arCOG04067">
    <property type="taxonomic scope" value="Archaea"/>
</dbReference>
<dbReference type="HOGENOM" id="CLU_036235_0_3_2"/>
<dbReference type="OrthoDB" id="5987at2157"/>
<dbReference type="Proteomes" id="UP000000253">
    <property type="component" value="Chromosome"/>
</dbReference>
<dbReference type="GO" id="GO:0022625">
    <property type="term" value="C:cytosolic large ribosomal subunit"/>
    <property type="evidence" value="ECO:0007669"/>
    <property type="project" value="TreeGrafter"/>
</dbReference>
<dbReference type="GO" id="GO:0019843">
    <property type="term" value="F:rRNA binding"/>
    <property type="evidence" value="ECO:0007669"/>
    <property type="project" value="UniProtKB-UniRule"/>
</dbReference>
<dbReference type="GO" id="GO:0003735">
    <property type="term" value="F:structural constituent of ribosome"/>
    <property type="evidence" value="ECO:0007669"/>
    <property type="project" value="InterPro"/>
</dbReference>
<dbReference type="GO" id="GO:0002181">
    <property type="term" value="P:cytoplasmic translation"/>
    <property type="evidence" value="ECO:0007669"/>
    <property type="project" value="TreeGrafter"/>
</dbReference>
<dbReference type="FunFam" id="2.40.50.140:FF:000020">
    <property type="entry name" value="60S ribosomal protein L2"/>
    <property type="match status" value="1"/>
</dbReference>
<dbReference type="FunFam" id="4.10.950.10:FF:000002">
    <property type="entry name" value="60S ribosomal protein L2"/>
    <property type="match status" value="1"/>
</dbReference>
<dbReference type="FunFam" id="2.30.30.30:FF:000006">
    <property type="entry name" value="60S ribosomal protein L8"/>
    <property type="match status" value="1"/>
</dbReference>
<dbReference type="Gene3D" id="2.30.30.30">
    <property type="match status" value="1"/>
</dbReference>
<dbReference type="Gene3D" id="2.40.50.140">
    <property type="entry name" value="Nucleic acid-binding proteins"/>
    <property type="match status" value="1"/>
</dbReference>
<dbReference type="Gene3D" id="4.10.950.10">
    <property type="entry name" value="Ribosomal protein L2, domain 3"/>
    <property type="match status" value="1"/>
</dbReference>
<dbReference type="HAMAP" id="MF_01320_A">
    <property type="entry name" value="Ribosomal_uL2_A"/>
    <property type="match status" value="1"/>
</dbReference>
<dbReference type="InterPro" id="IPR012340">
    <property type="entry name" value="NA-bd_OB-fold"/>
</dbReference>
<dbReference type="InterPro" id="IPR014722">
    <property type="entry name" value="Rib_uL2_dom2"/>
</dbReference>
<dbReference type="InterPro" id="IPR002171">
    <property type="entry name" value="Ribosomal_uL2"/>
</dbReference>
<dbReference type="InterPro" id="IPR023672">
    <property type="entry name" value="Ribosomal_uL2_arc_euk"/>
</dbReference>
<dbReference type="InterPro" id="IPR022669">
    <property type="entry name" value="Ribosomal_uL2_C"/>
</dbReference>
<dbReference type="InterPro" id="IPR022671">
    <property type="entry name" value="Ribosomal_uL2_CS"/>
</dbReference>
<dbReference type="InterPro" id="IPR014726">
    <property type="entry name" value="Ribosomal_uL2_dom3"/>
</dbReference>
<dbReference type="InterPro" id="IPR022666">
    <property type="entry name" value="Ribosomal_uL2_RNA-bd_dom"/>
</dbReference>
<dbReference type="InterPro" id="IPR008991">
    <property type="entry name" value="Translation_prot_SH3-like_sf"/>
</dbReference>
<dbReference type="NCBIfam" id="NF007180">
    <property type="entry name" value="PRK09612.1"/>
    <property type="match status" value="1"/>
</dbReference>
<dbReference type="PANTHER" id="PTHR13691:SF16">
    <property type="entry name" value="LARGE RIBOSOMAL SUBUNIT PROTEIN UL2"/>
    <property type="match status" value="1"/>
</dbReference>
<dbReference type="PANTHER" id="PTHR13691">
    <property type="entry name" value="RIBOSOMAL PROTEIN L2"/>
    <property type="match status" value="1"/>
</dbReference>
<dbReference type="Pfam" id="PF00181">
    <property type="entry name" value="Ribosomal_L2"/>
    <property type="match status" value="1"/>
</dbReference>
<dbReference type="Pfam" id="PF03947">
    <property type="entry name" value="Ribosomal_L2_C"/>
    <property type="match status" value="1"/>
</dbReference>
<dbReference type="PIRSF" id="PIRSF002158">
    <property type="entry name" value="Ribosomal_L2"/>
    <property type="match status" value="1"/>
</dbReference>
<dbReference type="SMART" id="SM01383">
    <property type="entry name" value="Ribosomal_L2"/>
    <property type="match status" value="1"/>
</dbReference>
<dbReference type="SMART" id="SM01382">
    <property type="entry name" value="Ribosomal_L2_C"/>
    <property type="match status" value="1"/>
</dbReference>
<dbReference type="SUPFAM" id="SSF50249">
    <property type="entry name" value="Nucleic acid-binding proteins"/>
    <property type="match status" value="1"/>
</dbReference>
<dbReference type="SUPFAM" id="SSF50104">
    <property type="entry name" value="Translation proteins SH3-like domain"/>
    <property type="match status" value="1"/>
</dbReference>
<dbReference type="PROSITE" id="PS00467">
    <property type="entry name" value="RIBOSOMAL_L2"/>
    <property type="match status" value="1"/>
</dbReference>
<protein>
    <recommendedName>
        <fullName evidence="1">Large ribosomal subunit protein uL2</fullName>
    </recommendedName>
    <alternativeName>
        <fullName evidence="3">50S ribosomal protein L2</fullName>
    </alternativeName>
</protein>
<sequence length="240" mass="25754">MGKRLISQNRGRGTPKYRSPTHKRKGAVKYRSYDEMEKDGKILGTVVDILHDPGRSAPVAKVRFANDEERLVLIPEGIQVGEEIECGISAEIKPGNVLPLGEIPEGIPVYNIETIPGDGGKLVRSGGCYAHVISHDVGKTIVKLPSGFSKVLNPACRATVGVVAGGGRKEKPFVKAGKKYHSLSAKAVAWPKVRGVAMNAVDHPYGGGRHQHLGKPSSVSRHTSPGRKVGHIASRRTGRK</sequence>